<accession>Q0KEP6</accession>
<reference key="1">
    <citation type="journal article" date="2006" name="Nat. Biotechnol.">
        <title>Genome sequence of the bioplastic-producing 'Knallgas' bacterium Ralstonia eutropha H16.</title>
        <authorList>
            <person name="Pohlmann A."/>
            <person name="Fricke W.F."/>
            <person name="Reinecke F."/>
            <person name="Kusian B."/>
            <person name="Liesegang H."/>
            <person name="Cramm R."/>
            <person name="Eitinger T."/>
            <person name="Ewering C."/>
            <person name="Poetter M."/>
            <person name="Schwartz E."/>
            <person name="Strittmatter A."/>
            <person name="Voss I."/>
            <person name="Gottschalk G."/>
            <person name="Steinbuechel A."/>
            <person name="Friedrich B."/>
            <person name="Bowien B."/>
        </authorList>
    </citation>
    <scope>NUCLEOTIDE SEQUENCE [LARGE SCALE GENOMIC DNA]</scope>
    <source>
        <strain>ATCC 17699 / DSM 428 / KCTC 22496 / NCIMB 10442 / H16 / Stanier 337</strain>
    </source>
</reference>
<keyword id="KW-0998">Cell outer membrane</keyword>
<keyword id="KW-0143">Chaperone</keyword>
<keyword id="KW-0449">Lipoprotein</keyword>
<keyword id="KW-0472">Membrane</keyword>
<keyword id="KW-0564">Palmitate</keyword>
<keyword id="KW-0653">Protein transport</keyword>
<keyword id="KW-1185">Reference proteome</keyword>
<keyword id="KW-0732">Signal</keyword>
<keyword id="KW-0813">Transport</keyword>
<sequence length="197" mass="21427">MNRSRRLALFCLGAPLLLQACASVAPSRSFDGDQAAASQQYTGRFSANYVRYGRDEGVQGSFRWEEQGRNVRLDLVSPLGQTLAVVTATPSGATLDLPNQPPRNAPEVDTLMEEALGFALPVAGMRDWLHGRATQGAPARTTRDEQGRLATLAQNGWTVRYVAWQDAAAQVPRRIDLARDAGSNPLSVRLVIDPRTP</sequence>
<proteinExistence type="inferred from homology"/>
<organism>
    <name type="scientific">Cupriavidus necator (strain ATCC 17699 / DSM 428 / KCTC 22496 / NCIMB 10442 / H16 / Stanier 337)</name>
    <name type="common">Ralstonia eutropha</name>
    <dbReference type="NCBI Taxonomy" id="381666"/>
    <lineage>
        <taxon>Bacteria</taxon>
        <taxon>Pseudomonadati</taxon>
        <taxon>Pseudomonadota</taxon>
        <taxon>Betaproteobacteria</taxon>
        <taxon>Burkholderiales</taxon>
        <taxon>Burkholderiaceae</taxon>
        <taxon>Cupriavidus</taxon>
    </lineage>
</organism>
<gene>
    <name evidence="1" type="primary">lolB</name>
    <name type="ordered locus">H16_A0375</name>
</gene>
<feature type="signal peptide" evidence="1">
    <location>
        <begin position="1"/>
        <end position="20"/>
    </location>
</feature>
<feature type="chain" id="PRO_1000021673" description="Outer-membrane lipoprotein LolB">
    <location>
        <begin position="21"/>
        <end position="197"/>
    </location>
</feature>
<feature type="lipid moiety-binding region" description="N-palmitoyl cysteine" evidence="1">
    <location>
        <position position="21"/>
    </location>
</feature>
<feature type="lipid moiety-binding region" description="S-diacylglycerol cysteine" evidence="1">
    <location>
        <position position="21"/>
    </location>
</feature>
<dbReference type="EMBL" id="AM260479">
    <property type="protein sequence ID" value="CAJ91525.1"/>
    <property type="molecule type" value="Genomic_DNA"/>
</dbReference>
<dbReference type="RefSeq" id="WP_010814376.1">
    <property type="nucleotide sequence ID" value="NZ_CP039287.1"/>
</dbReference>
<dbReference type="SMR" id="Q0KEP6"/>
<dbReference type="STRING" id="381666.H16_A0375"/>
<dbReference type="KEGG" id="reh:H16_A0375"/>
<dbReference type="eggNOG" id="COG3017">
    <property type="taxonomic scope" value="Bacteria"/>
</dbReference>
<dbReference type="HOGENOM" id="CLU_092816_3_0_4"/>
<dbReference type="OrthoDB" id="9797618at2"/>
<dbReference type="Proteomes" id="UP000008210">
    <property type="component" value="Chromosome 1"/>
</dbReference>
<dbReference type="GO" id="GO:0009279">
    <property type="term" value="C:cell outer membrane"/>
    <property type="evidence" value="ECO:0007669"/>
    <property type="project" value="UniProtKB-SubCell"/>
</dbReference>
<dbReference type="GO" id="GO:0044874">
    <property type="term" value="P:lipoprotein localization to outer membrane"/>
    <property type="evidence" value="ECO:0007669"/>
    <property type="project" value="UniProtKB-UniRule"/>
</dbReference>
<dbReference type="GO" id="GO:0015031">
    <property type="term" value="P:protein transport"/>
    <property type="evidence" value="ECO:0007669"/>
    <property type="project" value="UniProtKB-KW"/>
</dbReference>
<dbReference type="CDD" id="cd16326">
    <property type="entry name" value="LolB"/>
    <property type="match status" value="1"/>
</dbReference>
<dbReference type="Gene3D" id="2.50.20.10">
    <property type="entry name" value="Lipoprotein localisation LolA/LolB/LppX"/>
    <property type="match status" value="1"/>
</dbReference>
<dbReference type="HAMAP" id="MF_00233">
    <property type="entry name" value="LolB"/>
    <property type="match status" value="1"/>
</dbReference>
<dbReference type="InterPro" id="IPR029046">
    <property type="entry name" value="LolA/LolB/LppX"/>
</dbReference>
<dbReference type="InterPro" id="IPR004565">
    <property type="entry name" value="OM_lipoprot_LolB"/>
</dbReference>
<dbReference type="NCBIfam" id="TIGR00548">
    <property type="entry name" value="lolB"/>
    <property type="match status" value="1"/>
</dbReference>
<dbReference type="Pfam" id="PF03550">
    <property type="entry name" value="LolB"/>
    <property type="match status" value="1"/>
</dbReference>
<dbReference type="SUPFAM" id="SSF89392">
    <property type="entry name" value="Prokaryotic lipoproteins and lipoprotein localization factors"/>
    <property type="match status" value="1"/>
</dbReference>
<dbReference type="PROSITE" id="PS51257">
    <property type="entry name" value="PROKAR_LIPOPROTEIN"/>
    <property type="match status" value="1"/>
</dbReference>
<name>LOLB_CUPNH</name>
<comment type="function">
    <text evidence="1">Plays a critical role in the incorporation of lipoproteins in the outer membrane after they are released by the LolA protein.</text>
</comment>
<comment type="subunit">
    <text evidence="1">Monomer.</text>
</comment>
<comment type="subcellular location">
    <subcellularLocation>
        <location evidence="1">Cell outer membrane</location>
        <topology evidence="1">Lipid-anchor</topology>
    </subcellularLocation>
</comment>
<comment type="similarity">
    <text evidence="1">Belongs to the LolB family.</text>
</comment>
<evidence type="ECO:0000255" key="1">
    <source>
        <dbReference type="HAMAP-Rule" id="MF_00233"/>
    </source>
</evidence>
<protein>
    <recommendedName>
        <fullName evidence="1">Outer-membrane lipoprotein LolB</fullName>
    </recommendedName>
</protein>